<feature type="chain" id="PRO_1000064429" description="Der GTPase-activating protein YihI">
    <location>
        <begin position="1"/>
        <end position="171"/>
    </location>
</feature>
<feature type="region of interest" description="Disordered" evidence="2">
    <location>
        <begin position="1"/>
        <end position="99"/>
    </location>
</feature>
<feature type="region of interest" description="Disordered" evidence="2">
    <location>
        <begin position="145"/>
        <end position="171"/>
    </location>
</feature>
<feature type="compositionally biased region" description="Basic and acidic residues" evidence="2">
    <location>
        <begin position="20"/>
        <end position="30"/>
    </location>
</feature>
<feature type="compositionally biased region" description="Basic residues" evidence="2">
    <location>
        <begin position="31"/>
        <end position="40"/>
    </location>
</feature>
<feature type="compositionally biased region" description="Acidic residues" evidence="2">
    <location>
        <begin position="147"/>
        <end position="160"/>
    </location>
</feature>
<keyword id="KW-0343">GTPase activation</keyword>
<keyword id="KW-0690">Ribosome biogenesis</keyword>
<comment type="function">
    <text evidence="1">A GTPase-activating protein (GAP) that modifies Der/EngA GTPase function. May play a role in ribosome biogenesis.</text>
</comment>
<comment type="subunit">
    <text evidence="1">Interacts with Der.</text>
</comment>
<comment type="similarity">
    <text evidence="1">Belongs to the YihI family.</text>
</comment>
<organism>
    <name type="scientific">Salmonella choleraesuis (strain SC-B67)</name>
    <dbReference type="NCBI Taxonomy" id="321314"/>
    <lineage>
        <taxon>Bacteria</taxon>
        <taxon>Pseudomonadati</taxon>
        <taxon>Pseudomonadota</taxon>
        <taxon>Gammaproteobacteria</taxon>
        <taxon>Enterobacterales</taxon>
        <taxon>Enterobacteriaceae</taxon>
        <taxon>Salmonella</taxon>
    </lineage>
</organism>
<evidence type="ECO:0000255" key="1">
    <source>
        <dbReference type="HAMAP-Rule" id="MF_01058"/>
    </source>
</evidence>
<evidence type="ECO:0000256" key="2">
    <source>
        <dbReference type="SAM" id="MobiDB-lite"/>
    </source>
</evidence>
<reference key="1">
    <citation type="journal article" date="2005" name="Nucleic Acids Res.">
        <title>The genome sequence of Salmonella enterica serovar Choleraesuis, a highly invasive and resistant zoonotic pathogen.</title>
        <authorList>
            <person name="Chiu C.-H."/>
            <person name="Tang P."/>
            <person name="Chu C."/>
            <person name="Hu S."/>
            <person name="Bao Q."/>
            <person name="Yu J."/>
            <person name="Chou Y.-Y."/>
            <person name="Wang H.-S."/>
            <person name="Lee Y.-S."/>
        </authorList>
    </citation>
    <scope>NUCLEOTIDE SEQUENCE [LARGE SCALE GENOMIC DNA]</scope>
    <source>
        <strain>SC-B67</strain>
    </source>
</reference>
<proteinExistence type="inferred from homology"/>
<gene>
    <name evidence="1" type="primary">yihI</name>
    <name type="ordered locus">SCH_3895</name>
</gene>
<protein>
    <recommendedName>
        <fullName evidence="1">Der GTPase-activating protein YihI</fullName>
    </recommendedName>
</protein>
<accession>Q57HL1</accession>
<dbReference type="EMBL" id="AE017220">
    <property type="protein sequence ID" value="AAX67801.1"/>
    <property type="molecule type" value="Genomic_DNA"/>
</dbReference>
<dbReference type="RefSeq" id="WP_000743291.1">
    <property type="nucleotide sequence ID" value="NC_006905.1"/>
</dbReference>
<dbReference type="SMR" id="Q57HL1"/>
<dbReference type="KEGG" id="sec:SCH_3895"/>
<dbReference type="HOGENOM" id="CLU_094104_2_0_6"/>
<dbReference type="Proteomes" id="UP000000538">
    <property type="component" value="Chromosome"/>
</dbReference>
<dbReference type="GO" id="GO:0005096">
    <property type="term" value="F:GTPase activator activity"/>
    <property type="evidence" value="ECO:0007669"/>
    <property type="project" value="UniProtKB-KW"/>
</dbReference>
<dbReference type="GO" id="GO:0042254">
    <property type="term" value="P:ribosome biogenesis"/>
    <property type="evidence" value="ECO:0007669"/>
    <property type="project" value="UniProtKB-KW"/>
</dbReference>
<dbReference type="HAMAP" id="MF_01058">
    <property type="entry name" value="GAP_YihI"/>
    <property type="match status" value="1"/>
</dbReference>
<dbReference type="InterPro" id="IPR007336">
    <property type="entry name" value="YihI"/>
</dbReference>
<dbReference type="NCBIfam" id="NF003560">
    <property type="entry name" value="PRK05244.1-1"/>
    <property type="match status" value="1"/>
</dbReference>
<dbReference type="Pfam" id="PF04220">
    <property type="entry name" value="YihI"/>
    <property type="match status" value="1"/>
</dbReference>
<name>YIHI_SALCH</name>
<sequence length="171" mass="19199">MKKPTSAPRSKAFGKQRRKTREELNQEARDRKRLKKHRGHAPGSRAAGGNSASGGGNQNQQKDPRIGSKTPVPLGVTEKVTQQHKPKSEKPMLSPQAELDLLETDERLDALLERLEAGETLSAEDQAWVDAKLDRIDELMQKLGLSYDDDDEDDEEDEKQEDMMRLLRGGN</sequence>